<gene>
    <name evidence="1" type="primary">rnpA</name>
    <name type="ordered locus">SeHA_C4175</name>
</gene>
<evidence type="ECO:0000255" key="1">
    <source>
        <dbReference type="HAMAP-Rule" id="MF_00227"/>
    </source>
</evidence>
<reference key="1">
    <citation type="journal article" date="2011" name="J. Bacteriol.">
        <title>Comparative genomics of 28 Salmonella enterica isolates: evidence for CRISPR-mediated adaptive sublineage evolution.</title>
        <authorList>
            <person name="Fricke W.F."/>
            <person name="Mammel M.K."/>
            <person name="McDermott P.F."/>
            <person name="Tartera C."/>
            <person name="White D.G."/>
            <person name="Leclerc J.E."/>
            <person name="Ravel J."/>
            <person name="Cebula T.A."/>
        </authorList>
    </citation>
    <scope>NUCLEOTIDE SEQUENCE [LARGE SCALE GENOMIC DNA]</scope>
    <source>
        <strain>SL476</strain>
    </source>
</reference>
<organism>
    <name type="scientific">Salmonella heidelberg (strain SL476)</name>
    <dbReference type="NCBI Taxonomy" id="454169"/>
    <lineage>
        <taxon>Bacteria</taxon>
        <taxon>Pseudomonadati</taxon>
        <taxon>Pseudomonadota</taxon>
        <taxon>Gammaproteobacteria</taxon>
        <taxon>Enterobacterales</taxon>
        <taxon>Enterobacteriaceae</taxon>
        <taxon>Salmonella</taxon>
    </lineage>
</organism>
<keyword id="KW-0255">Endonuclease</keyword>
<keyword id="KW-0378">Hydrolase</keyword>
<keyword id="KW-0540">Nuclease</keyword>
<keyword id="KW-0694">RNA-binding</keyword>
<keyword id="KW-0819">tRNA processing</keyword>
<proteinExistence type="inferred from homology"/>
<name>RNPA_SALHS</name>
<feature type="chain" id="PRO_1000100389" description="Ribonuclease P protein component">
    <location>
        <begin position="1"/>
        <end position="119"/>
    </location>
</feature>
<comment type="function">
    <text evidence="1">RNaseP catalyzes the removal of the 5'-leader sequence from pre-tRNA to produce the mature 5'-terminus. It can also cleave other RNA substrates such as 4.5S RNA. The protein component plays an auxiliary but essential role in vivo by binding to the 5'-leader sequence and broadening the substrate specificity of the ribozyme.</text>
</comment>
<comment type="catalytic activity">
    <reaction evidence="1">
        <text>Endonucleolytic cleavage of RNA, removing 5'-extranucleotides from tRNA precursor.</text>
        <dbReference type="EC" id="3.1.26.5"/>
    </reaction>
</comment>
<comment type="subunit">
    <text evidence="1">Consists of a catalytic RNA component (M1 or rnpB) and a protein subunit.</text>
</comment>
<comment type="similarity">
    <text evidence="1">Belongs to the RnpA family.</text>
</comment>
<dbReference type="EC" id="3.1.26.5" evidence="1"/>
<dbReference type="EMBL" id="CP001120">
    <property type="protein sequence ID" value="ACF66883.1"/>
    <property type="molecule type" value="Genomic_DNA"/>
</dbReference>
<dbReference type="RefSeq" id="WP_000239725.1">
    <property type="nucleotide sequence ID" value="NC_011083.1"/>
</dbReference>
<dbReference type="SMR" id="B4TAV1"/>
<dbReference type="GeneID" id="93035306"/>
<dbReference type="KEGG" id="seh:SeHA_C4175"/>
<dbReference type="HOGENOM" id="CLU_117179_11_0_6"/>
<dbReference type="Proteomes" id="UP000001866">
    <property type="component" value="Chromosome"/>
</dbReference>
<dbReference type="GO" id="GO:0030677">
    <property type="term" value="C:ribonuclease P complex"/>
    <property type="evidence" value="ECO:0007669"/>
    <property type="project" value="TreeGrafter"/>
</dbReference>
<dbReference type="GO" id="GO:0042781">
    <property type="term" value="F:3'-tRNA processing endoribonuclease activity"/>
    <property type="evidence" value="ECO:0007669"/>
    <property type="project" value="TreeGrafter"/>
</dbReference>
<dbReference type="GO" id="GO:0004526">
    <property type="term" value="F:ribonuclease P activity"/>
    <property type="evidence" value="ECO:0007669"/>
    <property type="project" value="UniProtKB-UniRule"/>
</dbReference>
<dbReference type="GO" id="GO:0000049">
    <property type="term" value="F:tRNA binding"/>
    <property type="evidence" value="ECO:0007669"/>
    <property type="project" value="UniProtKB-UniRule"/>
</dbReference>
<dbReference type="GO" id="GO:0001682">
    <property type="term" value="P:tRNA 5'-leader removal"/>
    <property type="evidence" value="ECO:0007669"/>
    <property type="project" value="UniProtKB-UniRule"/>
</dbReference>
<dbReference type="FunFam" id="3.30.230.10:FF:000016">
    <property type="entry name" value="Ribonuclease P protein component"/>
    <property type="match status" value="1"/>
</dbReference>
<dbReference type="Gene3D" id="3.30.230.10">
    <property type="match status" value="1"/>
</dbReference>
<dbReference type="HAMAP" id="MF_00227">
    <property type="entry name" value="RNase_P"/>
    <property type="match status" value="1"/>
</dbReference>
<dbReference type="InterPro" id="IPR020568">
    <property type="entry name" value="Ribosomal_Su5_D2-typ_SF"/>
</dbReference>
<dbReference type="InterPro" id="IPR014721">
    <property type="entry name" value="Ribsml_uS5_D2-typ_fold_subgr"/>
</dbReference>
<dbReference type="InterPro" id="IPR000100">
    <property type="entry name" value="RNase_P"/>
</dbReference>
<dbReference type="InterPro" id="IPR020539">
    <property type="entry name" value="RNase_P_CS"/>
</dbReference>
<dbReference type="NCBIfam" id="TIGR00188">
    <property type="entry name" value="rnpA"/>
    <property type="match status" value="1"/>
</dbReference>
<dbReference type="PANTHER" id="PTHR33992">
    <property type="entry name" value="RIBONUCLEASE P PROTEIN COMPONENT"/>
    <property type="match status" value="1"/>
</dbReference>
<dbReference type="PANTHER" id="PTHR33992:SF1">
    <property type="entry name" value="RIBONUCLEASE P PROTEIN COMPONENT"/>
    <property type="match status" value="1"/>
</dbReference>
<dbReference type="Pfam" id="PF00825">
    <property type="entry name" value="Ribonuclease_P"/>
    <property type="match status" value="1"/>
</dbReference>
<dbReference type="SUPFAM" id="SSF54211">
    <property type="entry name" value="Ribosomal protein S5 domain 2-like"/>
    <property type="match status" value="1"/>
</dbReference>
<dbReference type="PROSITE" id="PS00648">
    <property type="entry name" value="RIBONUCLEASE_P"/>
    <property type="match status" value="1"/>
</dbReference>
<sequence>MVKLAFPRELRLLTPAHFTFVFQQPQRAGTPQITILGRLNSLGHPRIGLTVAKKNVRRAHERNRIKRLTRESFRLRQHELPAMDFVVVAKKGVADLDNRALSEALEKLWRRHCRLARGS</sequence>
<protein>
    <recommendedName>
        <fullName evidence="1">Ribonuclease P protein component</fullName>
        <shortName evidence="1">RNase P protein</shortName>
        <shortName evidence="1">RNaseP protein</shortName>
        <ecNumber evidence="1">3.1.26.5</ecNumber>
    </recommendedName>
    <alternativeName>
        <fullName evidence="1">Protein C5</fullName>
    </alternativeName>
</protein>
<accession>B4TAV1</accession>